<protein>
    <recommendedName>
        <fullName evidence="1">Peptide chain release factor 2</fullName>
        <shortName evidence="1">RF-2</shortName>
    </recommendedName>
</protein>
<gene>
    <name evidence="1" type="primary">prfB</name>
    <name type="ordered locus">KPK_0779</name>
</gene>
<keyword id="KW-0963">Cytoplasm</keyword>
<keyword id="KW-0488">Methylation</keyword>
<keyword id="KW-0648">Protein biosynthesis</keyword>
<comment type="function">
    <text evidence="1">Peptide chain release factor 2 directs the termination of translation in response to the peptide chain termination codons UGA and UAA.</text>
</comment>
<comment type="subcellular location">
    <subcellularLocation>
        <location evidence="1">Cytoplasm</location>
    </subcellularLocation>
</comment>
<comment type="PTM">
    <text evidence="1">Methylated by PrmC. Methylation increases the termination efficiency of RF2.</text>
</comment>
<comment type="similarity">
    <text evidence="1">Belongs to the prokaryotic/mitochondrial release factor family.</text>
</comment>
<sequence>MFEINPVKNRIQDLTERSDVLRGYLDYDAKKERLEEVNAELEQPDVWNEPERAQALGKERSSLEAIVDTLDQMSQGLEDVAGLLELAVEAEDEETFNEAVAELDGLEEKLAQLEFRRMFSGEYDSADCYLDIQAGSGGTEAQDWASMLMRMYLRWAEARGFKTEIIEESEGEVAGIKSVTIKIIGDYAYGWLRTETGVHRLVRKSPFDSGGRRHTSFSSAFVYPEVDDDIDIEINPADLRIDVYRASGAGGQHVNRTESAVRITHIPTGLVTQCQNDRSQHKNKDQAMKQMKAKLYELEMQKKNAEKQAMEDNKSDIGWGSQIRSYVLDDSRIKDLRTGVETRNTQAVLDGSLDQFIEASLKAGL</sequence>
<evidence type="ECO:0000255" key="1">
    <source>
        <dbReference type="HAMAP-Rule" id="MF_00094"/>
    </source>
</evidence>
<proteinExistence type="inferred from homology"/>
<accession>B5XUF3</accession>
<feature type="chain" id="PRO_1000093544" description="Peptide chain release factor 2">
    <location>
        <begin position="1"/>
        <end position="365"/>
    </location>
</feature>
<feature type="modified residue" description="N5-methylglutamine" evidence="1">
    <location>
        <position position="252"/>
    </location>
</feature>
<dbReference type="EMBL" id="CP000964">
    <property type="protein sequence ID" value="ACI09062.1"/>
    <property type="molecule type" value="Genomic_DNA"/>
</dbReference>
<dbReference type="SMR" id="B5XUF3"/>
<dbReference type="KEGG" id="kpe:KPK_0779"/>
<dbReference type="HOGENOM" id="CLU_220733_1_0_6"/>
<dbReference type="Proteomes" id="UP000001734">
    <property type="component" value="Chromosome"/>
</dbReference>
<dbReference type="GO" id="GO:0005737">
    <property type="term" value="C:cytoplasm"/>
    <property type="evidence" value="ECO:0007669"/>
    <property type="project" value="UniProtKB-SubCell"/>
</dbReference>
<dbReference type="GO" id="GO:0016149">
    <property type="term" value="F:translation release factor activity, codon specific"/>
    <property type="evidence" value="ECO:0007669"/>
    <property type="project" value="UniProtKB-UniRule"/>
</dbReference>
<dbReference type="FunFam" id="3.30.160.20:FF:000010">
    <property type="entry name" value="Peptide chain release factor 2"/>
    <property type="match status" value="1"/>
</dbReference>
<dbReference type="Gene3D" id="3.30.160.20">
    <property type="match status" value="1"/>
</dbReference>
<dbReference type="Gene3D" id="3.30.70.1660">
    <property type="match status" value="1"/>
</dbReference>
<dbReference type="Gene3D" id="1.20.58.410">
    <property type="entry name" value="Release factor"/>
    <property type="match status" value="1"/>
</dbReference>
<dbReference type="HAMAP" id="MF_00094">
    <property type="entry name" value="Rel_fac_2"/>
    <property type="match status" value="1"/>
</dbReference>
<dbReference type="InterPro" id="IPR005139">
    <property type="entry name" value="PCRF"/>
</dbReference>
<dbReference type="InterPro" id="IPR000352">
    <property type="entry name" value="Pep_chain_release_fac_I"/>
</dbReference>
<dbReference type="InterPro" id="IPR045853">
    <property type="entry name" value="Pep_chain_release_fac_I_sf"/>
</dbReference>
<dbReference type="InterPro" id="IPR004374">
    <property type="entry name" value="PrfB"/>
</dbReference>
<dbReference type="NCBIfam" id="TIGR00020">
    <property type="entry name" value="prfB"/>
    <property type="match status" value="1"/>
</dbReference>
<dbReference type="PANTHER" id="PTHR43116:SF3">
    <property type="entry name" value="CLASS I PEPTIDE CHAIN RELEASE FACTOR"/>
    <property type="match status" value="1"/>
</dbReference>
<dbReference type="PANTHER" id="PTHR43116">
    <property type="entry name" value="PEPTIDE CHAIN RELEASE FACTOR 2"/>
    <property type="match status" value="1"/>
</dbReference>
<dbReference type="Pfam" id="PF03462">
    <property type="entry name" value="PCRF"/>
    <property type="match status" value="1"/>
</dbReference>
<dbReference type="Pfam" id="PF00472">
    <property type="entry name" value="RF-1"/>
    <property type="match status" value="1"/>
</dbReference>
<dbReference type="SMART" id="SM00937">
    <property type="entry name" value="PCRF"/>
    <property type="match status" value="1"/>
</dbReference>
<dbReference type="SUPFAM" id="SSF75620">
    <property type="entry name" value="Release factor"/>
    <property type="match status" value="1"/>
</dbReference>
<dbReference type="PROSITE" id="PS00745">
    <property type="entry name" value="RF_PROK_I"/>
    <property type="match status" value="1"/>
</dbReference>
<name>RF2_KLEP3</name>
<reference key="1">
    <citation type="journal article" date="2008" name="PLoS Genet.">
        <title>Complete genome sequence of the N2-fixing broad host range endophyte Klebsiella pneumoniae 342 and virulence predictions verified in mice.</title>
        <authorList>
            <person name="Fouts D.E."/>
            <person name="Tyler H.L."/>
            <person name="DeBoy R.T."/>
            <person name="Daugherty S."/>
            <person name="Ren Q."/>
            <person name="Badger J.H."/>
            <person name="Durkin A.S."/>
            <person name="Huot H."/>
            <person name="Shrivastava S."/>
            <person name="Kothari S."/>
            <person name="Dodson R.J."/>
            <person name="Mohamoud Y."/>
            <person name="Khouri H."/>
            <person name="Roesch L.F.W."/>
            <person name="Krogfelt K.A."/>
            <person name="Struve C."/>
            <person name="Triplett E.W."/>
            <person name="Methe B.A."/>
        </authorList>
    </citation>
    <scope>NUCLEOTIDE SEQUENCE [LARGE SCALE GENOMIC DNA]</scope>
    <source>
        <strain>342</strain>
    </source>
</reference>
<organism>
    <name type="scientific">Klebsiella pneumoniae (strain 342)</name>
    <dbReference type="NCBI Taxonomy" id="507522"/>
    <lineage>
        <taxon>Bacteria</taxon>
        <taxon>Pseudomonadati</taxon>
        <taxon>Pseudomonadota</taxon>
        <taxon>Gammaproteobacteria</taxon>
        <taxon>Enterobacterales</taxon>
        <taxon>Enterobacteriaceae</taxon>
        <taxon>Klebsiella/Raoultella group</taxon>
        <taxon>Klebsiella</taxon>
        <taxon>Klebsiella pneumoniae complex</taxon>
    </lineage>
</organism>